<gene>
    <name evidence="2" type="primary">snrp-3</name>
    <name evidence="2" type="ORF">F08B4.7</name>
</gene>
<keyword id="KW-0479">Metal-binding</keyword>
<keyword id="KW-0539">Nucleus</keyword>
<keyword id="KW-1185">Reference proteome</keyword>
<keyword id="KW-0687">Ribonucleoprotein</keyword>
<keyword id="KW-0694">RNA-binding</keyword>
<keyword id="KW-0862">Zinc</keyword>
<keyword id="KW-0863">Zinc-finger</keyword>
<protein>
    <recommendedName>
        <fullName evidence="1">U1 small nuclear ribonucleoprotein C</fullName>
        <shortName evidence="1">U1 snRNP C</shortName>
        <shortName evidence="1">U1-C</shortName>
        <shortName evidence="1">U1C</shortName>
    </recommendedName>
</protein>
<organism>
    <name type="scientific">Caenorhabditis elegans</name>
    <dbReference type="NCBI Taxonomy" id="6239"/>
    <lineage>
        <taxon>Eukaryota</taxon>
        <taxon>Metazoa</taxon>
        <taxon>Ecdysozoa</taxon>
        <taxon>Nematoda</taxon>
        <taxon>Chromadorea</taxon>
        <taxon>Rhabditida</taxon>
        <taxon>Rhabditina</taxon>
        <taxon>Rhabditomorpha</taxon>
        <taxon>Rhabditoidea</taxon>
        <taxon>Rhabditidae</taxon>
        <taxon>Peloderinae</taxon>
        <taxon>Caenorhabditis</taxon>
    </lineage>
</organism>
<dbReference type="EMBL" id="FO080903">
    <property type="protein sequence ID" value="CCD67653.1"/>
    <property type="molecule type" value="Genomic_DNA"/>
</dbReference>
<dbReference type="PIR" id="T29485">
    <property type="entry name" value="T29485"/>
</dbReference>
<dbReference type="RefSeq" id="NP_001370586.1">
    <property type="nucleotide sequence ID" value="NM_001383150.2"/>
</dbReference>
<dbReference type="RefSeq" id="NP_501490.1">
    <property type="nucleotide sequence ID" value="NM_069089.5"/>
</dbReference>
<dbReference type="SMR" id="P90815"/>
<dbReference type="BioGRID" id="42784">
    <property type="interactions" value="7"/>
</dbReference>
<dbReference type="FunCoup" id="P90815">
    <property type="interactions" value="1148"/>
</dbReference>
<dbReference type="IntAct" id="P90815">
    <property type="interactions" value="2"/>
</dbReference>
<dbReference type="STRING" id="6239.F08B4.7.1"/>
<dbReference type="PaxDb" id="6239-F08B4.7"/>
<dbReference type="PeptideAtlas" id="P90815"/>
<dbReference type="EnsemblMetazoa" id="F08B4.7.1">
    <property type="protein sequence ID" value="F08B4.7.1"/>
    <property type="gene ID" value="WBGene00017238"/>
</dbReference>
<dbReference type="GeneID" id="177674"/>
<dbReference type="UCSC" id="F08B4.7.1">
    <property type="organism name" value="c. elegans"/>
</dbReference>
<dbReference type="AGR" id="WB:WBGene00017238"/>
<dbReference type="WormBase" id="F08B4.7">
    <property type="protein sequence ID" value="CE09232"/>
    <property type="gene ID" value="WBGene00017238"/>
    <property type="gene designation" value="snrp-3"/>
</dbReference>
<dbReference type="eggNOG" id="KOG3454">
    <property type="taxonomic scope" value="Eukaryota"/>
</dbReference>
<dbReference type="GeneTree" id="ENSGT00730000110997"/>
<dbReference type="HOGENOM" id="CLU_079697_3_1_1"/>
<dbReference type="InParanoid" id="P90815"/>
<dbReference type="OMA" id="GWKFREN"/>
<dbReference type="OrthoDB" id="76567at2759"/>
<dbReference type="PRO" id="PR:P90815"/>
<dbReference type="Proteomes" id="UP000001940">
    <property type="component" value="Chromosome IV"/>
</dbReference>
<dbReference type="Bgee" id="WBGene00017238">
    <property type="expression patterns" value="Expressed in embryo and 4 other cell types or tissues"/>
</dbReference>
<dbReference type="GO" id="GO:0000243">
    <property type="term" value="C:commitment complex"/>
    <property type="evidence" value="ECO:0007669"/>
    <property type="project" value="UniProtKB-UniRule"/>
</dbReference>
<dbReference type="GO" id="GO:0005685">
    <property type="term" value="C:U1 snRNP"/>
    <property type="evidence" value="ECO:0000318"/>
    <property type="project" value="GO_Central"/>
</dbReference>
<dbReference type="GO" id="GO:0071004">
    <property type="term" value="C:U2-type prespliceosome"/>
    <property type="evidence" value="ECO:0007669"/>
    <property type="project" value="UniProtKB-UniRule"/>
</dbReference>
<dbReference type="GO" id="GO:0003729">
    <property type="term" value="F:mRNA binding"/>
    <property type="evidence" value="ECO:0007669"/>
    <property type="project" value="UniProtKB-UniRule"/>
</dbReference>
<dbReference type="GO" id="GO:0030627">
    <property type="term" value="F:pre-mRNA 5'-splice site binding"/>
    <property type="evidence" value="ECO:0000318"/>
    <property type="project" value="GO_Central"/>
</dbReference>
<dbReference type="GO" id="GO:0030619">
    <property type="term" value="F:U1 snRNA binding"/>
    <property type="evidence" value="ECO:0007669"/>
    <property type="project" value="UniProtKB-UniRule"/>
</dbReference>
<dbReference type="GO" id="GO:0008270">
    <property type="term" value="F:zinc ion binding"/>
    <property type="evidence" value="ECO:0007669"/>
    <property type="project" value="UniProtKB-UniRule"/>
</dbReference>
<dbReference type="GO" id="GO:0000395">
    <property type="term" value="P:mRNA 5'-splice site recognition"/>
    <property type="evidence" value="ECO:0000318"/>
    <property type="project" value="GO_Central"/>
</dbReference>
<dbReference type="GO" id="GO:0000387">
    <property type="term" value="P:spliceosomal snRNP assembly"/>
    <property type="evidence" value="ECO:0007669"/>
    <property type="project" value="UniProtKB-UniRule"/>
</dbReference>
<dbReference type="FunFam" id="3.30.160.60:FF:000059">
    <property type="entry name" value="U1 small nuclear ribonucleoprotein C"/>
    <property type="match status" value="1"/>
</dbReference>
<dbReference type="Gene3D" id="3.30.160.60">
    <property type="entry name" value="Classic Zinc Finger"/>
    <property type="match status" value="1"/>
</dbReference>
<dbReference type="HAMAP" id="MF_03153">
    <property type="entry name" value="U1_C"/>
    <property type="match status" value="1"/>
</dbReference>
<dbReference type="InterPro" id="IPR000690">
    <property type="entry name" value="Matrin/U1-C_Znf_C2H2"/>
</dbReference>
<dbReference type="InterPro" id="IPR003604">
    <property type="entry name" value="Matrin/U1-like-C_Znf_C2H2"/>
</dbReference>
<dbReference type="InterPro" id="IPR013085">
    <property type="entry name" value="U1-CZ_Znf_C2H2"/>
</dbReference>
<dbReference type="InterPro" id="IPR017340">
    <property type="entry name" value="U1_snRNP-C"/>
</dbReference>
<dbReference type="InterPro" id="IPR036236">
    <property type="entry name" value="Znf_C2H2_sf"/>
</dbReference>
<dbReference type="PANTHER" id="PTHR31148">
    <property type="entry name" value="U1 SMALL NUCLEAR RIBONUCLEOPROTEIN C"/>
    <property type="match status" value="1"/>
</dbReference>
<dbReference type="PANTHER" id="PTHR31148:SF1">
    <property type="entry name" value="U1 SMALL NUCLEAR RIBONUCLEOPROTEIN C"/>
    <property type="match status" value="1"/>
</dbReference>
<dbReference type="Pfam" id="PF06220">
    <property type="entry name" value="zf-U1"/>
    <property type="match status" value="1"/>
</dbReference>
<dbReference type="PIRSF" id="PIRSF037969">
    <property type="entry name" value="U1_snRNP-C"/>
    <property type="match status" value="1"/>
</dbReference>
<dbReference type="SMART" id="SM00451">
    <property type="entry name" value="ZnF_U1"/>
    <property type="match status" value="1"/>
</dbReference>
<dbReference type="SUPFAM" id="SSF57667">
    <property type="entry name" value="beta-beta-alpha zinc fingers"/>
    <property type="match status" value="1"/>
</dbReference>
<dbReference type="PROSITE" id="PS50171">
    <property type="entry name" value="ZF_MATRIN"/>
    <property type="match status" value="1"/>
</dbReference>
<reference key="1">
    <citation type="journal article" date="1998" name="Science">
        <title>Genome sequence of the nematode C. elegans: a platform for investigating biology.</title>
        <authorList>
            <consortium name="The C. elegans sequencing consortium"/>
        </authorList>
    </citation>
    <scope>NUCLEOTIDE SEQUENCE [LARGE SCALE GENOMIC DNA]</scope>
    <source>
        <strain>Bristol N2</strain>
    </source>
</reference>
<name>RU1C_CAEEL</name>
<feature type="chain" id="PRO_0000414267" description="U1 small nuclear ribonucleoprotein C">
    <location>
        <begin position="1"/>
        <end position="142"/>
    </location>
</feature>
<feature type="zinc finger region" description="Matrin-type" evidence="1">
    <location>
        <begin position="4"/>
        <end position="36"/>
    </location>
</feature>
<comment type="function">
    <text evidence="1">Component of the spliceosomal U1 snRNP, which is essential for recognition of the pre-mRNA 5' splice-site and the subsequent assembly of the spliceosome. U1-C is directly involved in initial 5' splice-site recognition for both constitutive and regulated alternative splicing. The interaction with the 5' splice-site seems to precede base-pairing between the pre-mRNA and the U1 snRNA. Stimulates commitment or early (E) complex formation by stabilizing the base pairing of the 5' end of the U1 snRNA and the 5' splice-site region.</text>
</comment>
<comment type="subunit">
    <text evidence="1">U1 snRNP is composed of the 7 core Sm proteins B/B', D1, D2, D3, E, F and G that assemble in a heptameric protein ring on the Sm site of the small nuclear RNA to form the core snRNP, and at least 3 U1 snRNP-specific proteins U1-70K, U1-A and U1-C. U1-C interacts with U1 snRNA and the 5' splice-site region of the pre-mRNA.</text>
</comment>
<comment type="subcellular location">
    <subcellularLocation>
        <location evidence="1">Nucleus</location>
    </subcellularLocation>
</comment>
<comment type="similarity">
    <text evidence="1">Belongs to the U1 small nuclear ribonucleoprotein C family.</text>
</comment>
<sequence length="142" mass="15562">MPKYYCDYCDTFLTHDSPSVRKTHNGGRKHKDNVRMFYQKWMEDQAQKLVDQTARAFATNRMQGAVPRTTMGMAPVPPVGHHPMMGGPPGMPMMAPRPFPGPGVGFPGAPGMPPFPGGPMGMAGPPGMPPMMPRPPQQFRPM</sequence>
<evidence type="ECO:0000255" key="1">
    <source>
        <dbReference type="HAMAP-Rule" id="MF_03153"/>
    </source>
</evidence>
<evidence type="ECO:0000312" key="2">
    <source>
        <dbReference type="WormBase" id="F08B4.7"/>
    </source>
</evidence>
<accession>P90815</accession>
<proteinExistence type="inferred from homology"/>